<organism>
    <name type="scientific">Schizosaccharomyces pombe (strain 972 / ATCC 24843)</name>
    <name type="common">Fission yeast</name>
    <dbReference type="NCBI Taxonomy" id="284812"/>
    <lineage>
        <taxon>Eukaryota</taxon>
        <taxon>Fungi</taxon>
        <taxon>Dikarya</taxon>
        <taxon>Ascomycota</taxon>
        <taxon>Taphrinomycotina</taxon>
        <taxon>Schizosaccharomycetes</taxon>
        <taxon>Schizosaccharomycetales</taxon>
        <taxon>Schizosaccharomycetaceae</taxon>
        <taxon>Schizosaccharomyces</taxon>
    </lineage>
</organism>
<comment type="sequence caution" evidence="3">
    <conflict type="frameshift">
        <sequence resource="EMBL-CDS" id="BAA13894"/>
    </conflict>
</comment>
<accession>Q9UT68</accession>
<accession>P78882</accession>
<proteinExistence type="evidence at protein level"/>
<dbReference type="EMBL" id="D89233">
    <property type="protein sequence ID" value="BAA13894.1"/>
    <property type="status" value="ALT_FRAME"/>
    <property type="molecule type" value="mRNA"/>
</dbReference>
<dbReference type="EMBL" id="CU329672">
    <property type="protein sequence ID" value="CAB55769.1"/>
    <property type="molecule type" value="Genomic_DNA"/>
</dbReference>
<dbReference type="PIR" id="T41354">
    <property type="entry name" value="T41354"/>
</dbReference>
<dbReference type="PIR" id="T43137">
    <property type="entry name" value="T43137"/>
</dbReference>
<dbReference type="RefSeq" id="NP_588402.1">
    <property type="nucleotide sequence ID" value="NM_001023393.2"/>
</dbReference>
<dbReference type="SMR" id="Q9UT68"/>
<dbReference type="BioGRID" id="275920">
    <property type="interactions" value="52"/>
</dbReference>
<dbReference type="STRING" id="284812.Q9UT68"/>
<dbReference type="iPTMnet" id="Q9UT68"/>
<dbReference type="PaxDb" id="4896-SPCC4F11.03c.1"/>
<dbReference type="EnsemblFungi" id="SPCC4F11.03c.1">
    <property type="protein sequence ID" value="SPCC4F11.03c.1:pep"/>
    <property type="gene ID" value="SPCC4F11.03c"/>
</dbReference>
<dbReference type="KEGG" id="spo:2539354"/>
<dbReference type="PomBase" id="SPCC4F11.03c"/>
<dbReference type="VEuPathDB" id="FungiDB:SPCC4F11.03c"/>
<dbReference type="HOGENOM" id="CLU_829386_0_0_1"/>
<dbReference type="InParanoid" id="Q9UT68"/>
<dbReference type="OMA" id="YHTQLQG"/>
<dbReference type="PRO" id="PR:Q9UT68"/>
<dbReference type="Proteomes" id="UP000002485">
    <property type="component" value="Chromosome III"/>
</dbReference>
<dbReference type="GO" id="GO:0005829">
    <property type="term" value="C:cytosol"/>
    <property type="evidence" value="ECO:0007005"/>
    <property type="project" value="PomBase"/>
</dbReference>
<dbReference type="GO" id="GO:0005634">
    <property type="term" value="C:nucleus"/>
    <property type="evidence" value="ECO:0007005"/>
    <property type="project" value="PomBase"/>
</dbReference>
<protein>
    <recommendedName>
        <fullName>Uncharacterized protein C4F11.03c</fullName>
    </recommendedName>
</protein>
<evidence type="ECO:0000256" key="1">
    <source>
        <dbReference type="SAM" id="MobiDB-lite"/>
    </source>
</evidence>
<evidence type="ECO:0000269" key="2">
    <source>
    </source>
</evidence>
<evidence type="ECO:0000305" key="3"/>
<sequence length="335" mass="36436">MDAEGEQKSNGVKEPNTPLREALDEIFLNVGYLLRSLLANVPNALYHSQLQAACQKFQDYCDLEEIRIIEAKRVVERDLRSLEAKEVEEKSQFASFVSATPPGANSLQGNVSLPSGNNFFTSSFDSENISKPGEVSLSESQLLGNLNQQSSIQLPDRMPKTTNGTLADPNMPPKTTVNDQDVTKDASQQFGGSNFSNYLRDNDSFQFGMNTDASGDAHLQASEFLLPNLFGNSSTSPQDNFGTSNSALSRNLDLFGSPSSENKSTAGSASLFPNQQMGIDLQAQENYSAAFGNDGSFASHLTNTFDNALNLPTDIPTTESINDLFGENFDFTMTK</sequence>
<keyword id="KW-0597">Phosphoprotein</keyword>
<keyword id="KW-1185">Reference proteome</keyword>
<feature type="chain" id="PRO_0000116808" description="Uncharacterized protein C4F11.03c">
    <location>
        <begin position="1"/>
        <end position="335"/>
    </location>
</feature>
<feature type="region of interest" description="Disordered" evidence="1">
    <location>
        <begin position="152"/>
        <end position="179"/>
    </location>
</feature>
<feature type="region of interest" description="Disordered" evidence="1">
    <location>
        <begin position="252"/>
        <end position="271"/>
    </location>
</feature>
<feature type="compositionally biased region" description="Polar residues" evidence="1">
    <location>
        <begin position="257"/>
        <end position="271"/>
    </location>
</feature>
<feature type="modified residue" description="Phosphoserine" evidence="2">
    <location>
        <position position="257"/>
    </location>
</feature>
<feature type="modified residue" description="Phosphoserine" evidence="2">
    <location>
        <position position="260"/>
    </location>
</feature>
<feature type="sequence conflict" description="In Ref. 1; BAA13894." evidence="3" ref="1">
    <original>Q</original>
    <variation>P</variation>
    <location>
        <position position="49"/>
    </location>
</feature>
<feature type="sequence conflict" description="In Ref. 1; BAA13894." evidence="3" ref="1">
    <original>N</original>
    <variation>K</variation>
    <location>
        <position position="117"/>
    </location>
</feature>
<gene>
    <name type="ORF">SPCC4F11.03c</name>
</gene>
<reference key="1">
    <citation type="journal article" date="1997" name="DNA Res.">
        <title>Identification of open reading frames in Schizosaccharomyces pombe cDNAs.</title>
        <authorList>
            <person name="Yoshioka S."/>
            <person name="Kato K."/>
            <person name="Nakai K."/>
            <person name="Okayama H."/>
            <person name="Nojima H."/>
        </authorList>
    </citation>
    <scope>NUCLEOTIDE SEQUENCE [LARGE SCALE MRNA]</scope>
    <source>
        <strain>PR745</strain>
    </source>
</reference>
<reference key="2">
    <citation type="journal article" date="2002" name="Nature">
        <title>The genome sequence of Schizosaccharomyces pombe.</title>
        <authorList>
            <person name="Wood V."/>
            <person name="Gwilliam R."/>
            <person name="Rajandream M.A."/>
            <person name="Lyne M.H."/>
            <person name="Lyne R."/>
            <person name="Stewart A."/>
            <person name="Sgouros J.G."/>
            <person name="Peat N."/>
            <person name="Hayles J."/>
            <person name="Baker S.G."/>
            <person name="Basham D."/>
            <person name="Bowman S."/>
            <person name="Brooks K."/>
            <person name="Brown D."/>
            <person name="Brown S."/>
            <person name="Chillingworth T."/>
            <person name="Churcher C.M."/>
            <person name="Collins M."/>
            <person name="Connor R."/>
            <person name="Cronin A."/>
            <person name="Davis P."/>
            <person name="Feltwell T."/>
            <person name="Fraser A."/>
            <person name="Gentles S."/>
            <person name="Goble A."/>
            <person name="Hamlin N."/>
            <person name="Harris D.E."/>
            <person name="Hidalgo J."/>
            <person name="Hodgson G."/>
            <person name="Holroyd S."/>
            <person name="Hornsby T."/>
            <person name="Howarth S."/>
            <person name="Huckle E.J."/>
            <person name="Hunt S."/>
            <person name="Jagels K."/>
            <person name="James K.D."/>
            <person name="Jones L."/>
            <person name="Jones M."/>
            <person name="Leather S."/>
            <person name="McDonald S."/>
            <person name="McLean J."/>
            <person name="Mooney P."/>
            <person name="Moule S."/>
            <person name="Mungall K.L."/>
            <person name="Murphy L.D."/>
            <person name="Niblett D."/>
            <person name="Odell C."/>
            <person name="Oliver K."/>
            <person name="O'Neil S."/>
            <person name="Pearson D."/>
            <person name="Quail M.A."/>
            <person name="Rabbinowitsch E."/>
            <person name="Rutherford K.M."/>
            <person name="Rutter S."/>
            <person name="Saunders D."/>
            <person name="Seeger K."/>
            <person name="Sharp S."/>
            <person name="Skelton J."/>
            <person name="Simmonds M.N."/>
            <person name="Squares R."/>
            <person name="Squares S."/>
            <person name="Stevens K."/>
            <person name="Taylor K."/>
            <person name="Taylor R.G."/>
            <person name="Tivey A."/>
            <person name="Walsh S.V."/>
            <person name="Warren T."/>
            <person name="Whitehead S."/>
            <person name="Woodward J.R."/>
            <person name="Volckaert G."/>
            <person name="Aert R."/>
            <person name="Robben J."/>
            <person name="Grymonprez B."/>
            <person name="Weltjens I."/>
            <person name="Vanstreels E."/>
            <person name="Rieger M."/>
            <person name="Schaefer M."/>
            <person name="Mueller-Auer S."/>
            <person name="Gabel C."/>
            <person name="Fuchs M."/>
            <person name="Duesterhoeft A."/>
            <person name="Fritzc C."/>
            <person name="Holzer E."/>
            <person name="Moestl D."/>
            <person name="Hilbert H."/>
            <person name="Borzym K."/>
            <person name="Langer I."/>
            <person name="Beck A."/>
            <person name="Lehrach H."/>
            <person name="Reinhardt R."/>
            <person name="Pohl T.M."/>
            <person name="Eger P."/>
            <person name="Zimmermann W."/>
            <person name="Wedler H."/>
            <person name="Wambutt R."/>
            <person name="Purnelle B."/>
            <person name="Goffeau A."/>
            <person name="Cadieu E."/>
            <person name="Dreano S."/>
            <person name="Gloux S."/>
            <person name="Lelaure V."/>
            <person name="Mottier S."/>
            <person name="Galibert F."/>
            <person name="Aves S.J."/>
            <person name="Xiang Z."/>
            <person name="Hunt C."/>
            <person name="Moore K."/>
            <person name="Hurst S.M."/>
            <person name="Lucas M."/>
            <person name="Rochet M."/>
            <person name="Gaillardin C."/>
            <person name="Tallada V.A."/>
            <person name="Garzon A."/>
            <person name="Thode G."/>
            <person name="Daga R.R."/>
            <person name="Cruzado L."/>
            <person name="Jimenez J."/>
            <person name="Sanchez M."/>
            <person name="del Rey F."/>
            <person name="Benito J."/>
            <person name="Dominguez A."/>
            <person name="Revuelta J.L."/>
            <person name="Moreno S."/>
            <person name="Armstrong J."/>
            <person name="Forsburg S.L."/>
            <person name="Cerutti L."/>
            <person name="Lowe T."/>
            <person name="McCombie W.R."/>
            <person name="Paulsen I."/>
            <person name="Potashkin J."/>
            <person name="Shpakovski G.V."/>
            <person name="Ussery D."/>
            <person name="Barrell B.G."/>
            <person name="Nurse P."/>
        </authorList>
    </citation>
    <scope>NUCLEOTIDE SEQUENCE [LARGE SCALE GENOMIC DNA]</scope>
    <source>
        <strain>972 / ATCC 24843</strain>
    </source>
</reference>
<reference key="3">
    <citation type="journal article" date="2008" name="J. Proteome Res.">
        <title>Phosphoproteome analysis of fission yeast.</title>
        <authorList>
            <person name="Wilson-Grady J.T."/>
            <person name="Villen J."/>
            <person name="Gygi S.P."/>
        </authorList>
    </citation>
    <scope>PHOSPHORYLATION [LARGE SCALE ANALYSIS] AT SER-257 AND SER-260</scope>
    <scope>IDENTIFICATION BY MASS SPECTROMETRY</scope>
</reference>
<name>YJ53_SCHPO</name>